<name>GLGB_NITOC</name>
<organism>
    <name type="scientific">Nitrosococcus oceani (strain ATCC 19707 / BCRC 17464 / JCM 30415 / NCIMB 11848 / C-107)</name>
    <dbReference type="NCBI Taxonomy" id="323261"/>
    <lineage>
        <taxon>Bacteria</taxon>
        <taxon>Pseudomonadati</taxon>
        <taxon>Pseudomonadota</taxon>
        <taxon>Gammaproteobacteria</taxon>
        <taxon>Chromatiales</taxon>
        <taxon>Chromatiaceae</taxon>
        <taxon>Nitrosococcus</taxon>
    </lineage>
</organism>
<dbReference type="EC" id="2.4.1.18" evidence="1"/>
<dbReference type="EMBL" id="CP000127">
    <property type="protein sequence ID" value="ABA57416.1"/>
    <property type="molecule type" value="Genomic_DNA"/>
</dbReference>
<dbReference type="RefSeq" id="WP_011330510.1">
    <property type="nucleotide sequence ID" value="NC_007484.1"/>
</dbReference>
<dbReference type="SMR" id="Q3JCN0"/>
<dbReference type="FunCoup" id="Q3JCN0">
    <property type="interactions" value="459"/>
</dbReference>
<dbReference type="STRING" id="323261.Noc_0904"/>
<dbReference type="CAZy" id="CBM48">
    <property type="family name" value="Carbohydrate-Binding Module Family 48"/>
</dbReference>
<dbReference type="CAZy" id="GH13">
    <property type="family name" value="Glycoside Hydrolase Family 13"/>
</dbReference>
<dbReference type="KEGG" id="noc:Noc_0904"/>
<dbReference type="eggNOG" id="COG0296">
    <property type="taxonomic scope" value="Bacteria"/>
</dbReference>
<dbReference type="HOGENOM" id="CLU_004245_3_2_6"/>
<dbReference type="InParanoid" id="Q3JCN0"/>
<dbReference type="UniPathway" id="UPA00164"/>
<dbReference type="Proteomes" id="UP000006838">
    <property type="component" value="Chromosome"/>
</dbReference>
<dbReference type="GO" id="GO:0005829">
    <property type="term" value="C:cytosol"/>
    <property type="evidence" value="ECO:0007669"/>
    <property type="project" value="TreeGrafter"/>
</dbReference>
<dbReference type="GO" id="GO:0003844">
    <property type="term" value="F:1,4-alpha-glucan branching enzyme activity"/>
    <property type="evidence" value="ECO:0007669"/>
    <property type="project" value="UniProtKB-UniRule"/>
</dbReference>
<dbReference type="GO" id="GO:0043169">
    <property type="term" value="F:cation binding"/>
    <property type="evidence" value="ECO:0007669"/>
    <property type="project" value="InterPro"/>
</dbReference>
<dbReference type="GO" id="GO:0004553">
    <property type="term" value="F:hydrolase activity, hydrolyzing O-glycosyl compounds"/>
    <property type="evidence" value="ECO:0007669"/>
    <property type="project" value="InterPro"/>
</dbReference>
<dbReference type="GO" id="GO:0005978">
    <property type="term" value="P:glycogen biosynthetic process"/>
    <property type="evidence" value="ECO:0007669"/>
    <property type="project" value="UniProtKB-UniRule"/>
</dbReference>
<dbReference type="CDD" id="cd11322">
    <property type="entry name" value="AmyAc_Glg_BE"/>
    <property type="match status" value="1"/>
</dbReference>
<dbReference type="CDD" id="cd02855">
    <property type="entry name" value="E_set_GBE_prok_N"/>
    <property type="match status" value="1"/>
</dbReference>
<dbReference type="FunFam" id="2.60.40.10:FF:000169">
    <property type="entry name" value="1,4-alpha-glucan branching enzyme GlgB"/>
    <property type="match status" value="1"/>
</dbReference>
<dbReference type="FunFam" id="2.60.40.1180:FF:000002">
    <property type="entry name" value="1,4-alpha-glucan branching enzyme GlgB"/>
    <property type="match status" value="1"/>
</dbReference>
<dbReference type="FunFam" id="3.20.20.80:FF:000003">
    <property type="entry name" value="1,4-alpha-glucan branching enzyme GlgB"/>
    <property type="match status" value="1"/>
</dbReference>
<dbReference type="Gene3D" id="3.20.20.80">
    <property type="entry name" value="Glycosidases"/>
    <property type="match status" value="1"/>
</dbReference>
<dbReference type="Gene3D" id="2.60.40.1180">
    <property type="entry name" value="Golgi alpha-mannosidase II"/>
    <property type="match status" value="1"/>
</dbReference>
<dbReference type="Gene3D" id="2.60.40.10">
    <property type="entry name" value="Immunoglobulins"/>
    <property type="match status" value="1"/>
</dbReference>
<dbReference type="HAMAP" id="MF_00685">
    <property type="entry name" value="GlgB"/>
    <property type="match status" value="1"/>
</dbReference>
<dbReference type="InterPro" id="IPR006048">
    <property type="entry name" value="A-amylase/branching_C"/>
</dbReference>
<dbReference type="InterPro" id="IPR037439">
    <property type="entry name" value="Branching_enzy"/>
</dbReference>
<dbReference type="InterPro" id="IPR006407">
    <property type="entry name" value="GlgB"/>
</dbReference>
<dbReference type="InterPro" id="IPR054169">
    <property type="entry name" value="GlgB_N"/>
</dbReference>
<dbReference type="InterPro" id="IPR044143">
    <property type="entry name" value="GlgB_N_E_set_prok"/>
</dbReference>
<dbReference type="InterPro" id="IPR006047">
    <property type="entry name" value="Glyco_hydro_13_cat_dom"/>
</dbReference>
<dbReference type="InterPro" id="IPR004193">
    <property type="entry name" value="Glyco_hydro_13_N"/>
</dbReference>
<dbReference type="InterPro" id="IPR013780">
    <property type="entry name" value="Glyco_hydro_b"/>
</dbReference>
<dbReference type="InterPro" id="IPR017853">
    <property type="entry name" value="Glycoside_hydrolase_SF"/>
</dbReference>
<dbReference type="InterPro" id="IPR013783">
    <property type="entry name" value="Ig-like_fold"/>
</dbReference>
<dbReference type="InterPro" id="IPR014756">
    <property type="entry name" value="Ig_E-set"/>
</dbReference>
<dbReference type="NCBIfam" id="TIGR01515">
    <property type="entry name" value="branching_enzym"/>
    <property type="match status" value="1"/>
</dbReference>
<dbReference type="NCBIfam" id="NF003811">
    <property type="entry name" value="PRK05402.1"/>
    <property type="match status" value="1"/>
</dbReference>
<dbReference type="NCBIfam" id="NF008967">
    <property type="entry name" value="PRK12313.1"/>
    <property type="match status" value="1"/>
</dbReference>
<dbReference type="PANTHER" id="PTHR43651">
    <property type="entry name" value="1,4-ALPHA-GLUCAN-BRANCHING ENZYME"/>
    <property type="match status" value="1"/>
</dbReference>
<dbReference type="PANTHER" id="PTHR43651:SF3">
    <property type="entry name" value="1,4-ALPHA-GLUCAN-BRANCHING ENZYME"/>
    <property type="match status" value="1"/>
</dbReference>
<dbReference type="Pfam" id="PF00128">
    <property type="entry name" value="Alpha-amylase"/>
    <property type="match status" value="2"/>
</dbReference>
<dbReference type="Pfam" id="PF02806">
    <property type="entry name" value="Alpha-amylase_C"/>
    <property type="match status" value="1"/>
</dbReference>
<dbReference type="Pfam" id="PF02922">
    <property type="entry name" value="CBM_48"/>
    <property type="match status" value="1"/>
</dbReference>
<dbReference type="Pfam" id="PF22019">
    <property type="entry name" value="GlgB_N"/>
    <property type="match status" value="1"/>
</dbReference>
<dbReference type="PIRSF" id="PIRSF000463">
    <property type="entry name" value="GlgB"/>
    <property type="match status" value="1"/>
</dbReference>
<dbReference type="SMART" id="SM00642">
    <property type="entry name" value="Aamy"/>
    <property type="match status" value="1"/>
</dbReference>
<dbReference type="SUPFAM" id="SSF51445">
    <property type="entry name" value="(Trans)glycosidases"/>
    <property type="match status" value="1"/>
</dbReference>
<dbReference type="SUPFAM" id="SSF81296">
    <property type="entry name" value="E set domains"/>
    <property type="match status" value="2"/>
</dbReference>
<dbReference type="SUPFAM" id="SSF51011">
    <property type="entry name" value="Glycosyl hydrolase domain"/>
    <property type="match status" value="1"/>
</dbReference>
<feature type="chain" id="PRO_0000260671" description="1,4-alpha-glucan branching enzyme GlgB">
    <location>
        <begin position="1"/>
        <end position="749"/>
    </location>
</feature>
<feature type="active site" description="Nucleophile" evidence="1">
    <location>
        <position position="415"/>
    </location>
</feature>
<feature type="active site" description="Proton donor" evidence="1">
    <location>
        <position position="468"/>
    </location>
</feature>
<protein>
    <recommendedName>
        <fullName evidence="1">1,4-alpha-glucan branching enzyme GlgB</fullName>
        <ecNumber evidence="1">2.4.1.18</ecNumber>
    </recommendedName>
    <alternativeName>
        <fullName evidence="1">1,4-alpha-D-glucan:1,4-alpha-D-glucan 6-glucosyl-transferase</fullName>
    </alternativeName>
    <alternativeName>
        <fullName evidence="1">Alpha-(1-&gt;4)-glucan branching enzyme</fullName>
    </alternativeName>
    <alternativeName>
        <fullName evidence="1">Glycogen branching enzyme</fullName>
        <shortName evidence="1">BE</shortName>
    </alternativeName>
</protein>
<reference key="1">
    <citation type="journal article" date="2006" name="Appl. Environ. Microbiol.">
        <title>Complete genome sequence of the marine, chemolithoautotrophic, ammonia-oxidizing bacterium Nitrosococcus oceani ATCC 19707.</title>
        <authorList>
            <person name="Klotz M.G."/>
            <person name="Arp D.J."/>
            <person name="Chain P.S.G."/>
            <person name="El-Sheikh A.F."/>
            <person name="Hauser L.J."/>
            <person name="Hommes N.G."/>
            <person name="Larimer F.W."/>
            <person name="Malfatti S.A."/>
            <person name="Norton J.M."/>
            <person name="Poret-Peterson A.T."/>
            <person name="Vergez L.M."/>
            <person name="Ward B.B."/>
        </authorList>
    </citation>
    <scope>NUCLEOTIDE SEQUENCE [LARGE SCALE GENOMIC DNA]</scope>
    <source>
        <strain>ATCC 19707 / BCRC 17464 / JCM 30415 / NCIMB 11848 / C-107</strain>
    </source>
</reference>
<sequence>MTNSQYSPQPMAAEFSEAMEKLVNACYSDPFRVLGPHPYQKGIVVRAYLPHAIQAWIGTEPPQEMARSSAINLFEWHGKAKALPLPYQVLWEDKMGFTHYEYDPYCFPPQLSDYDLHLFGEGKHWHVYRILGSHPVIVDGTSGVLFATWAPEAERVSIVGDFNRWDGRCHPMQLRGLTGVWELFIPGLKPGTLYKYELRNRNRGSIHLKSDPYGQRFEQRPHTASIVAAKTNYLWQDRKWMEQRKQFDWLHQPISVYEVHLGSWQRGENGAFLNYRQLARQLVDYVLKTGFTHIELLPVTEHPLDASWGYQTTGYFAPTSRFGSPDEFRYFVDHCHLHGIGVLMDWVPGHFPKDAHGLAQFDGSALYEHEDPRLGEHRDWGTLIFNYGRHEVRNFLLSSALYWLEEFHIDGLRVDAVASMLYLDYSRQEGDWIPNKYGGRENLEAIDFLRELNKVLHAQHPGVLVIAEESTSWPMVSHPIYVGGLGFSMKWNMGWMNDTLSYMSKDPIYRHYHHDALTFGLLYAFNENFMLPLSHDEVVHGKQSLLYKMPGDEWQRFANLRLLYTMMFTYPGKKLLFMGCEFGQGEEWNESRSLDWYLLNYPVHQGVQAAIKDLNHLYRSLPALNYYDFAKEGFEWIDCHDSAQSVLSYLRLKDGDFVIVVLNFTPVPRTNYRLGVPKSGVYLECFNSDSTYYGGSNMGNSQTIQTDSITWMGRPYSINITVPPLAGIVLRLKTPASKMPATAPLSPGK</sequence>
<proteinExistence type="inferred from homology"/>
<comment type="function">
    <text evidence="1">Catalyzes the formation of the alpha-1,6-glucosidic linkages in glycogen by scission of a 1,4-alpha-linked oligosaccharide from growing alpha-1,4-glucan chains and the subsequent attachment of the oligosaccharide to the alpha-1,6 position.</text>
</comment>
<comment type="catalytic activity">
    <reaction evidence="1">
        <text>Transfers a segment of a (1-&gt;4)-alpha-D-glucan chain to a primary hydroxy group in a similar glucan chain.</text>
        <dbReference type="EC" id="2.4.1.18"/>
    </reaction>
</comment>
<comment type="pathway">
    <text evidence="1">Glycan biosynthesis; glycogen biosynthesis.</text>
</comment>
<comment type="subunit">
    <text evidence="1">Monomer.</text>
</comment>
<comment type="similarity">
    <text evidence="1">Belongs to the glycosyl hydrolase 13 family. GlgB subfamily.</text>
</comment>
<keyword id="KW-0119">Carbohydrate metabolism</keyword>
<keyword id="KW-0320">Glycogen biosynthesis</keyword>
<keyword id="KW-0321">Glycogen metabolism</keyword>
<keyword id="KW-0328">Glycosyltransferase</keyword>
<keyword id="KW-1185">Reference proteome</keyword>
<keyword id="KW-0808">Transferase</keyword>
<evidence type="ECO:0000255" key="1">
    <source>
        <dbReference type="HAMAP-Rule" id="MF_00685"/>
    </source>
</evidence>
<accession>Q3JCN0</accession>
<gene>
    <name evidence="1" type="primary">glgB</name>
    <name type="ordered locus">Noc_0904</name>
</gene>